<keyword id="KW-0067">ATP-binding</keyword>
<keyword id="KW-0238">DNA-binding</keyword>
<keyword id="KW-0479">Metal-binding</keyword>
<keyword id="KW-0547">Nucleotide-binding</keyword>
<keyword id="KW-1185">Reference proteome</keyword>
<keyword id="KW-0678">Repressor</keyword>
<keyword id="KW-0804">Transcription</keyword>
<keyword id="KW-0805">Transcription regulation</keyword>
<keyword id="KW-0862">Zinc</keyword>
<keyword id="KW-0863">Zinc-finger</keyword>
<reference key="1">
    <citation type="submission" date="2007-10" db="EMBL/GenBank/DDBJ databases">
        <title>Complete sequence of chromosome 1 of Burkholderia multivorans ATCC 17616.</title>
        <authorList>
            <person name="Copeland A."/>
            <person name="Lucas S."/>
            <person name="Lapidus A."/>
            <person name="Barry K."/>
            <person name="Glavina del Rio T."/>
            <person name="Dalin E."/>
            <person name="Tice H."/>
            <person name="Pitluck S."/>
            <person name="Chain P."/>
            <person name="Malfatti S."/>
            <person name="Shin M."/>
            <person name="Vergez L."/>
            <person name="Schmutz J."/>
            <person name="Larimer F."/>
            <person name="Land M."/>
            <person name="Hauser L."/>
            <person name="Kyrpides N."/>
            <person name="Kim E."/>
            <person name="Tiedje J."/>
            <person name="Richardson P."/>
        </authorList>
    </citation>
    <scope>NUCLEOTIDE SEQUENCE [LARGE SCALE GENOMIC DNA]</scope>
    <source>
        <strain>ATCC 17616 / 249</strain>
    </source>
</reference>
<reference key="2">
    <citation type="submission" date="2007-04" db="EMBL/GenBank/DDBJ databases">
        <title>Complete genome sequence of Burkholderia multivorans ATCC 17616.</title>
        <authorList>
            <person name="Ohtsubo Y."/>
            <person name="Yamashita A."/>
            <person name="Kurokawa K."/>
            <person name="Takami H."/>
            <person name="Yuhara S."/>
            <person name="Nishiyama E."/>
            <person name="Endo R."/>
            <person name="Miyazaki R."/>
            <person name="Ono A."/>
            <person name="Yano K."/>
            <person name="Ito M."/>
            <person name="Sota M."/>
            <person name="Yuji N."/>
            <person name="Hattori M."/>
            <person name="Tsuda M."/>
        </authorList>
    </citation>
    <scope>NUCLEOTIDE SEQUENCE [LARGE SCALE GENOMIC DNA]</scope>
    <source>
        <strain>ATCC 17616 / 249</strain>
    </source>
</reference>
<feature type="chain" id="PRO_1000124476" description="Transcriptional repressor NrdR">
    <location>
        <begin position="1"/>
        <end position="159"/>
    </location>
</feature>
<feature type="domain" description="ATP-cone" evidence="1">
    <location>
        <begin position="49"/>
        <end position="139"/>
    </location>
</feature>
<feature type="zinc finger region" evidence="1">
    <location>
        <begin position="3"/>
        <end position="34"/>
    </location>
</feature>
<gene>
    <name evidence="1" type="primary">nrdR</name>
    <name type="ordered locus">Bmul_2580</name>
    <name type="ordered locus">BMULJ_00658</name>
</gene>
<accession>A9AFP3</accession>
<sequence>MRCPFCRHEDTQVVDSRVSEDGAAIRRRRRCSACDKRFTTYERVELNLPAVVKKDGSRTEFDRRKIVASMQLALRKRPVAADAIDAAVARIEYQLLATGEREVRSEKLGELVMNELRGLDTIAYVRFASVYRRFEDVSEFADVIEEFRRASPAKPPRKR</sequence>
<comment type="function">
    <text evidence="1">Negatively regulates transcription of bacterial ribonucleotide reductase nrd genes and operons by binding to NrdR-boxes.</text>
</comment>
<comment type="cofactor">
    <cofactor evidence="1">
        <name>Zn(2+)</name>
        <dbReference type="ChEBI" id="CHEBI:29105"/>
    </cofactor>
    <text evidence="1">Binds 1 zinc ion.</text>
</comment>
<comment type="similarity">
    <text evidence="1">Belongs to the NrdR family.</text>
</comment>
<proteinExistence type="inferred from homology"/>
<evidence type="ECO:0000255" key="1">
    <source>
        <dbReference type="HAMAP-Rule" id="MF_00440"/>
    </source>
</evidence>
<dbReference type="EMBL" id="CP000868">
    <property type="protein sequence ID" value="ABX16264.1"/>
    <property type="molecule type" value="Genomic_DNA"/>
</dbReference>
<dbReference type="EMBL" id="AP009385">
    <property type="protein sequence ID" value="BAG42621.1"/>
    <property type="molecule type" value="Genomic_DNA"/>
</dbReference>
<dbReference type="RefSeq" id="WP_006417067.1">
    <property type="nucleotide sequence ID" value="NC_010804.1"/>
</dbReference>
<dbReference type="SMR" id="A9AFP3"/>
<dbReference type="STRING" id="395019.BMULJ_00658"/>
<dbReference type="GeneID" id="93171095"/>
<dbReference type="KEGG" id="bmj:BMULJ_00658"/>
<dbReference type="KEGG" id="bmu:Bmul_2580"/>
<dbReference type="eggNOG" id="COG1327">
    <property type="taxonomic scope" value="Bacteria"/>
</dbReference>
<dbReference type="HOGENOM" id="CLU_108412_0_0_4"/>
<dbReference type="Proteomes" id="UP000008815">
    <property type="component" value="Chromosome 1"/>
</dbReference>
<dbReference type="GO" id="GO:0005524">
    <property type="term" value="F:ATP binding"/>
    <property type="evidence" value="ECO:0007669"/>
    <property type="project" value="UniProtKB-KW"/>
</dbReference>
<dbReference type="GO" id="GO:0003677">
    <property type="term" value="F:DNA binding"/>
    <property type="evidence" value="ECO:0007669"/>
    <property type="project" value="UniProtKB-KW"/>
</dbReference>
<dbReference type="GO" id="GO:0008270">
    <property type="term" value="F:zinc ion binding"/>
    <property type="evidence" value="ECO:0007669"/>
    <property type="project" value="UniProtKB-UniRule"/>
</dbReference>
<dbReference type="GO" id="GO:0045892">
    <property type="term" value="P:negative regulation of DNA-templated transcription"/>
    <property type="evidence" value="ECO:0007669"/>
    <property type="project" value="UniProtKB-UniRule"/>
</dbReference>
<dbReference type="HAMAP" id="MF_00440">
    <property type="entry name" value="NrdR"/>
    <property type="match status" value="1"/>
</dbReference>
<dbReference type="InterPro" id="IPR005144">
    <property type="entry name" value="ATP-cone_dom"/>
</dbReference>
<dbReference type="InterPro" id="IPR055173">
    <property type="entry name" value="NrdR-like_N"/>
</dbReference>
<dbReference type="InterPro" id="IPR003796">
    <property type="entry name" value="RNR_NrdR-like"/>
</dbReference>
<dbReference type="NCBIfam" id="TIGR00244">
    <property type="entry name" value="transcriptional regulator NrdR"/>
    <property type="match status" value="1"/>
</dbReference>
<dbReference type="PANTHER" id="PTHR30455">
    <property type="entry name" value="TRANSCRIPTIONAL REPRESSOR NRDR"/>
    <property type="match status" value="1"/>
</dbReference>
<dbReference type="PANTHER" id="PTHR30455:SF2">
    <property type="entry name" value="TRANSCRIPTIONAL REPRESSOR NRDR"/>
    <property type="match status" value="1"/>
</dbReference>
<dbReference type="Pfam" id="PF03477">
    <property type="entry name" value="ATP-cone"/>
    <property type="match status" value="1"/>
</dbReference>
<dbReference type="Pfam" id="PF22811">
    <property type="entry name" value="Zn_ribbon_NrdR"/>
    <property type="match status" value="1"/>
</dbReference>
<dbReference type="PROSITE" id="PS51161">
    <property type="entry name" value="ATP_CONE"/>
    <property type="match status" value="1"/>
</dbReference>
<name>NRDR_BURM1</name>
<organism>
    <name type="scientific">Burkholderia multivorans (strain ATCC 17616 / 249)</name>
    <dbReference type="NCBI Taxonomy" id="395019"/>
    <lineage>
        <taxon>Bacteria</taxon>
        <taxon>Pseudomonadati</taxon>
        <taxon>Pseudomonadota</taxon>
        <taxon>Betaproteobacteria</taxon>
        <taxon>Burkholderiales</taxon>
        <taxon>Burkholderiaceae</taxon>
        <taxon>Burkholderia</taxon>
        <taxon>Burkholderia cepacia complex</taxon>
    </lineage>
</organism>
<protein>
    <recommendedName>
        <fullName evidence="1">Transcriptional repressor NrdR</fullName>
    </recommendedName>
</protein>